<organism>
    <name type="scientific">Legionella pneumophila subsp. pneumophila (strain Philadelphia 1 / ATCC 33152 / DSM 7513)</name>
    <dbReference type="NCBI Taxonomy" id="272624"/>
    <lineage>
        <taxon>Bacteria</taxon>
        <taxon>Pseudomonadati</taxon>
        <taxon>Pseudomonadota</taxon>
        <taxon>Gammaproteobacteria</taxon>
        <taxon>Legionellales</taxon>
        <taxon>Legionellaceae</taxon>
        <taxon>Legionella</taxon>
    </lineage>
</organism>
<keyword id="KW-0627">Porphyrin biosynthesis</keyword>
<keyword id="KW-1185">Reference proteome</keyword>
<keyword id="KW-0808">Transferase</keyword>
<proteinExistence type="inferred from homology"/>
<reference key="1">
    <citation type="journal article" date="2004" name="Science">
        <title>The genomic sequence of the accidental pathogen Legionella pneumophila.</title>
        <authorList>
            <person name="Chien M."/>
            <person name="Morozova I."/>
            <person name="Shi S."/>
            <person name="Sheng H."/>
            <person name="Chen J."/>
            <person name="Gomez S.M."/>
            <person name="Asamani G."/>
            <person name="Hill K."/>
            <person name="Nuara J."/>
            <person name="Feder M."/>
            <person name="Rineer J."/>
            <person name="Greenberg J.J."/>
            <person name="Steshenko V."/>
            <person name="Park S.H."/>
            <person name="Zhao B."/>
            <person name="Teplitskaya E."/>
            <person name="Edwards J.R."/>
            <person name="Pampou S."/>
            <person name="Georghiou A."/>
            <person name="Chou I.-C."/>
            <person name="Iannuccilli W."/>
            <person name="Ulz M.E."/>
            <person name="Kim D.H."/>
            <person name="Geringer-Sameth A."/>
            <person name="Goldsberry C."/>
            <person name="Morozov P."/>
            <person name="Fischer S.G."/>
            <person name="Segal G."/>
            <person name="Qu X."/>
            <person name="Rzhetsky A."/>
            <person name="Zhang P."/>
            <person name="Cayanis E."/>
            <person name="De Jong P.J."/>
            <person name="Ju J."/>
            <person name="Kalachikov S."/>
            <person name="Shuman H.A."/>
            <person name="Russo J.J."/>
        </authorList>
    </citation>
    <scope>NUCLEOTIDE SEQUENCE [LARGE SCALE GENOMIC DNA]</scope>
    <source>
        <strain>Philadelphia 1 / ATCC 33152 / DSM 7513</strain>
    </source>
</reference>
<gene>
    <name evidence="1" type="primary">hemC</name>
    <name type="ordered locus">lpg2735</name>
</gene>
<protein>
    <recommendedName>
        <fullName evidence="1">Porphobilinogen deaminase</fullName>
        <shortName evidence="1">PBG</shortName>
        <ecNumber evidence="1">2.5.1.61</ecNumber>
    </recommendedName>
    <alternativeName>
        <fullName evidence="1">Hydroxymethylbilane synthase</fullName>
        <shortName evidence="1">HMBS</shortName>
    </alternativeName>
    <alternativeName>
        <fullName evidence="1">Pre-uroporphyrinogen synthase</fullName>
    </alternativeName>
</protein>
<comment type="function">
    <text evidence="1">Tetrapolymerization of the monopyrrole PBG into the hydroxymethylbilane pre-uroporphyrinogen in several discrete steps.</text>
</comment>
<comment type="catalytic activity">
    <reaction evidence="1">
        <text>4 porphobilinogen + H2O = hydroxymethylbilane + 4 NH4(+)</text>
        <dbReference type="Rhea" id="RHEA:13185"/>
        <dbReference type="ChEBI" id="CHEBI:15377"/>
        <dbReference type="ChEBI" id="CHEBI:28938"/>
        <dbReference type="ChEBI" id="CHEBI:57845"/>
        <dbReference type="ChEBI" id="CHEBI:58126"/>
        <dbReference type="EC" id="2.5.1.61"/>
    </reaction>
</comment>
<comment type="cofactor">
    <cofactor evidence="1">
        <name>dipyrromethane</name>
        <dbReference type="ChEBI" id="CHEBI:60342"/>
    </cofactor>
    <text evidence="1">Binds 1 dipyrromethane group covalently.</text>
</comment>
<comment type="pathway">
    <text evidence="1">Porphyrin-containing compound metabolism; protoporphyrin-IX biosynthesis; coproporphyrinogen-III from 5-aminolevulinate: step 2/4.</text>
</comment>
<comment type="subunit">
    <text evidence="1">Monomer.</text>
</comment>
<comment type="miscellaneous">
    <text evidence="1">The porphobilinogen subunits are added to the dipyrromethane group.</text>
</comment>
<comment type="similarity">
    <text evidence="1">Belongs to the HMBS family.</text>
</comment>
<comment type="sequence caution" evidence="2">
    <conflict type="erroneous initiation">
        <sequence resource="EMBL-CDS" id="AAU28791"/>
    </conflict>
</comment>
<feature type="chain" id="PRO_0000142949" description="Porphobilinogen deaminase">
    <location>
        <begin position="1"/>
        <end position="309"/>
    </location>
</feature>
<feature type="modified residue" description="S-(dipyrrolylmethanemethyl)cysteine" evidence="1">
    <location>
        <position position="242"/>
    </location>
</feature>
<dbReference type="EC" id="2.5.1.61" evidence="1"/>
<dbReference type="EMBL" id="AE017354">
    <property type="protein sequence ID" value="AAU28791.1"/>
    <property type="status" value="ALT_INIT"/>
    <property type="molecule type" value="Genomic_DNA"/>
</dbReference>
<dbReference type="RefSeq" id="WP_027223811.1">
    <property type="nucleotide sequence ID" value="NC_002942.5"/>
</dbReference>
<dbReference type="RefSeq" id="YP_096738.1">
    <property type="nucleotide sequence ID" value="NC_002942.5"/>
</dbReference>
<dbReference type="SMR" id="Q5ZRY6"/>
<dbReference type="STRING" id="272624.lpg2735"/>
<dbReference type="PaxDb" id="272624-lpg2735"/>
<dbReference type="GeneID" id="57036736"/>
<dbReference type="KEGG" id="lpn:lpg2735"/>
<dbReference type="PATRIC" id="fig|272624.6.peg.2922"/>
<dbReference type="eggNOG" id="COG0181">
    <property type="taxonomic scope" value="Bacteria"/>
</dbReference>
<dbReference type="HOGENOM" id="CLU_019704_0_2_6"/>
<dbReference type="OrthoDB" id="9810298at2"/>
<dbReference type="UniPathway" id="UPA00251">
    <property type="reaction ID" value="UER00319"/>
</dbReference>
<dbReference type="Proteomes" id="UP000000609">
    <property type="component" value="Chromosome"/>
</dbReference>
<dbReference type="GO" id="GO:0005737">
    <property type="term" value="C:cytoplasm"/>
    <property type="evidence" value="ECO:0007669"/>
    <property type="project" value="TreeGrafter"/>
</dbReference>
<dbReference type="GO" id="GO:0004418">
    <property type="term" value="F:hydroxymethylbilane synthase activity"/>
    <property type="evidence" value="ECO:0007669"/>
    <property type="project" value="UniProtKB-UniRule"/>
</dbReference>
<dbReference type="GO" id="GO:0006782">
    <property type="term" value="P:protoporphyrinogen IX biosynthetic process"/>
    <property type="evidence" value="ECO:0007669"/>
    <property type="project" value="UniProtKB-UniRule"/>
</dbReference>
<dbReference type="CDD" id="cd13646">
    <property type="entry name" value="PBP2_EcHMBS_like"/>
    <property type="match status" value="1"/>
</dbReference>
<dbReference type="FunFam" id="3.40.190.10:FF:000004">
    <property type="entry name" value="Porphobilinogen deaminase"/>
    <property type="match status" value="1"/>
</dbReference>
<dbReference type="FunFam" id="3.40.190.10:FF:000005">
    <property type="entry name" value="Porphobilinogen deaminase"/>
    <property type="match status" value="1"/>
</dbReference>
<dbReference type="Gene3D" id="3.40.190.10">
    <property type="entry name" value="Periplasmic binding protein-like II"/>
    <property type="match status" value="2"/>
</dbReference>
<dbReference type="Gene3D" id="3.30.160.40">
    <property type="entry name" value="Porphobilinogen deaminase, C-terminal domain"/>
    <property type="match status" value="1"/>
</dbReference>
<dbReference type="HAMAP" id="MF_00260">
    <property type="entry name" value="Porphobil_deam"/>
    <property type="match status" value="1"/>
</dbReference>
<dbReference type="InterPro" id="IPR000860">
    <property type="entry name" value="HemC"/>
</dbReference>
<dbReference type="InterPro" id="IPR022419">
    <property type="entry name" value="Porphobilin_deaminase_cofac_BS"/>
</dbReference>
<dbReference type="InterPro" id="IPR022417">
    <property type="entry name" value="Porphobilin_deaminase_N"/>
</dbReference>
<dbReference type="InterPro" id="IPR022418">
    <property type="entry name" value="Porphobilinogen_deaminase_C"/>
</dbReference>
<dbReference type="InterPro" id="IPR036803">
    <property type="entry name" value="Porphobilinogen_deaminase_C_sf"/>
</dbReference>
<dbReference type="NCBIfam" id="TIGR00212">
    <property type="entry name" value="hemC"/>
    <property type="match status" value="1"/>
</dbReference>
<dbReference type="PANTHER" id="PTHR11557">
    <property type="entry name" value="PORPHOBILINOGEN DEAMINASE"/>
    <property type="match status" value="1"/>
</dbReference>
<dbReference type="PANTHER" id="PTHR11557:SF0">
    <property type="entry name" value="PORPHOBILINOGEN DEAMINASE"/>
    <property type="match status" value="1"/>
</dbReference>
<dbReference type="Pfam" id="PF01379">
    <property type="entry name" value="Porphobil_deam"/>
    <property type="match status" value="1"/>
</dbReference>
<dbReference type="Pfam" id="PF03900">
    <property type="entry name" value="Porphobil_deamC"/>
    <property type="match status" value="1"/>
</dbReference>
<dbReference type="PIRSF" id="PIRSF001438">
    <property type="entry name" value="4pyrrol_synth_OHMeBilane_synth"/>
    <property type="match status" value="1"/>
</dbReference>
<dbReference type="PRINTS" id="PR00151">
    <property type="entry name" value="PORPHBDMNASE"/>
</dbReference>
<dbReference type="SUPFAM" id="SSF53850">
    <property type="entry name" value="Periplasmic binding protein-like II"/>
    <property type="match status" value="1"/>
</dbReference>
<dbReference type="SUPFAM" id="SSF54782">
    <property type="entry name" value="Porphobilinogen deaminase (hydroxymethylbilane synthase), C-terminal domain"/>
    <property type="match status" value="1"/>
</dbReference>
<dbReference type="PROSITE" id="PS00533">
    <property type="entry name" value="PORPHOBILINOGEN_DEAM"/>
    <property type="match status" value="1"/>
</dbReference>
<name>HEM3_LEGPH</name>
<accession>Q5ZRY6</accession>
<evidence type="ECO:0000255" key="1">
    <source>
        <dbReference type="HAMAP-Rule" id="MF_00260"/>
    </source>
</evidence>
<evidence type="ECO:0000305" key="2"/>
<sequence length="309" mass="33987">MSAKIIRIATRQSPLALWQANHVREMLVKQWPNLSIELLPMITSGDRFLKDKLLSAGGKGLFVKELEEALLDKRADLAVHSTKDMPAQLPDGLLLTAICKRDNPFDALISPQFKSLAALPKNAIIGTSSLRRQSQLLAYNPNLQIKTLRGNIHTRLSKLESGEYQAIILAAAGLERMGLAHHITQLIPDDIMLPTCAQGALCIECRTDDLEIQELVHGLNDPISALCVHTERRVNAKLGGNCHIPFAVYCTITEEKLLLLRAKVLNMDGSQMIDDEQQGKIAEAEVIADRCTESLMTKGAMSLLSTIPS</sequence>